<reference key="1">
    <citation type="journal article" date="2006" name="Nat. Biotechnol.">
        <title>Genome sequence of the bioplastic-producing 'Knallgas' bacterium Ralstonia eutropha H16.</title>
        <authorList>
            <person name="Pohlmann A."/>
            <person name="Fricke W.F."/>
            <person name="Reinecke F."/>
            <person name="Kusian B."/>
            <person name="Liesegang H."/>
            <person name="Cramm R."/>
            <person name="Eitinger T."/>
            <person name="Ewering C."/>
            <person name="Poetter M."/>
            <person name="Schwartz E."/>
            <person name="Strittmatter A."/>
            <person name="Voss I."/>
            <person name="Gottschalk G."/>
            <person name="Steinbuechel A."/>
            <person name="Friedrich B."/>
            <person name="Bowien B."/>
        </authorList>
    </citation>
    <scope>NUCLEOTIDE SEQUENCE [LARGE SCALE GENOMIC DNA]</scope>
    <source>
        <strain>ATCC 17699 / DSM 428 / KCTC 22496 / NCIMB 10442 / H16 / Stanier 337</strain>
    </source>
</reference>
<organism>
    <name type="scientific">Cupriavidus necator (strain ATCC 17699 / DSM 428 / KCTC 22496 / NCIMB 10442 / H16 / Stanier 337)</name>
    <name type="common">Ralstonia eutropha</name>
    <dbReference type="NCBI Taxonomy" id="381666"/>
    <lineage>
        <taxon>Bacteria</taxon>
        <taxon>Pseudomonadati</taxon>
        <taxon>Pseudomonadota</taxon>
        <taxon>Betaproteobacteria</taxon>
        <taxon>Burkholderiales</taxon>
        <taxon>Burkholderiaceae</taxon>
        <taxon>Cupriavidus</taxon>
    </lineage>
</organism>
<evidence type="ECO:0000255" key="1">
    <source>
        <dbReference type="HAMAP-Rule" id="MF_00083"/>
    </source>
</evidence>
<feature type="chain" id="PRO_1000010636" description="Peptidyl-tRNA hydrolase">
    <location>
        <begin position="1"/>
        <end position="198"/>
    </location>
</feature>
<feature type="active site" description="Proton acceptor" evidence="1">
    <location>
        <position position="20"/>
    </location>
</feature>
<feature type="binding site" evidence="1">
    <location>
        <position position="15"/>
    </location>
    <ligand>
        <name>tRNA</name>
        <dbReference type="ChEBI" id="CHEBI:17843"/>
    </ligand>
</feature>
<feature type="binding site" evidence="1">
    <location>
        <position position="66"/>
    </location>
    <ligand>
        <name>tRNA</name>
        <dbReference type="ChEBI" id="CHEBI:17843"/>
    </ligand>
</feature>
<feature type="binding site" evidence="1">
    <location>
        <position position="68"/>
    </location>
    <ligand>
        <name>tRNA</name>
        <dbReference type="ChEBI" id="CHEBI:17843"/>
    </ligand>
</feature>
<feature type="binding site" evidence="1">
    <location>
        <position position="114"/>
    </location>
    <ligand>
        <name>tRNA</name>
        <dbReference type="ChEBI" id="CHEBI:17843"/>
    </ligand>
</feature>
<feature type="site" description="Discriminates between blocked and unblocked aminoacyl-tRNA" evidence="1">
    <location>
        <position position="10"/>
    </location>
</feature>
<feature type="site" description="Stabilizes the basic form of H active site to accept a proton" evidence="1">
    <location>
        <position position="93"/>
    </location>
</feature>
<gene>
    <name evidence="1" type="primary">pth</name>
    <name type="ordered locus">H16_A0370</name>
</gene>
<dbReference type="EC" id="3.1.1.29" evidence="1"/>
<dbReference type="EMBL" id="AM260479">
    <property type="protein sequence ID" value="CAJ91521.1"/>
    <property type="molecule type" value="Genomic_DNA"/>
</dbReference>
<dbReference type="RefSeq" id="WP_010814372.1">
    <property type="nucleotide sequence ID" value="NZ_CP039287.1"/>
</dbReference>
<dbReference type="SMR" id="Q0KEQ0"/>
<dbReference type="STRING" id="381666.H16_A0370"/>
<dbReference type="KEGG" id="reh:H16_A0370"/>
<dbReference type="eggNOG" id="COG0193">
    <property type="taxonomic scope" value="Bacteria"/>
</dbReference>
<dbReference type="HOGENOM" id="CLU_062456_3_1_4"/>
<dbReference type="OrthoDB" id="9800507at2"/>
<dbReference type="Proteomes" id="UP000008210">
    <property type="component" value="Chromosome 1"/>
</dbReference>
<dbReference type="GO" id="GO:0005737">
    <property type="term" value="C:cytoplasm"/>
    <property type="evidence" value="ECO:0007669"/>
    <property type="project" value="UniProtKB-SubCell"/>
</dbReference>
<dbReference type="GO" id="GO:0004045">
    <property type="term" value="F:peptidyl-tRNA hydrolase activity"/>
    <property type="evidence" value="ECO:0007669"/>
    <property type="project" value="UniProtKB-UniRule"/>
</dbReference>
<dbReference type="GO" id="GO:0000049">
    <property type="term" value="F:tRNA binding"/>
    <property type="evidence" value="ECO:0007669"/>
    <property type="project" value="UniProtKB-UniRule"/>
</dbReference>
<dbReference type="GO" id="GO:0006515">
    <property type="term" value="P:protein quality control for misfolded or incompletely synthesized proteins"/>
    <property type="evidence" value="ECO:0007669"/>
    <property type="project" value="UniProtKB-UniRule"/>
</dbReference>
<dbReference type="GO" id="GO:0072344">
    <property type="term" value="P:rescue of stalled ribosome"/>
    <property type="evidence" value="ECO:0007669"/>
    <property type="project" value="UniProtKB-UniRule"/>
</dbReference>
<dbReference type="CDD" id="cd00462">
    <property type="entry name" value="PTH"/>
    <property type="match status" value="1"/>
</dbReference>
<dbReference type="FunFam" id="3.40.50.1470:FF:000001">
    <property type="entry name" value="Peptidyl-tRNA hydrolase"/>
    <property type="match status" value="1"/>
</dbReference>
<dbReference type="Gene3D" id="3.40.50.1470">
    <property type="entry name" value="Peptidyl-tRNA hydrolase"/>
    <property type="match status" value="1"/>
</dbReference>
<dbReference type="HAMAP" id="MF_00083">
    <property type="entry name" value="Pept_tRNA_hydro_bact"/>
    <property type="match status" value="1"/>
</dbReference>
<dbReference type="InterPro" id="IPR001328">
    <property type="entry name" value="Pept_tRNA_hydro"/>
</dbReference>
<dbReference type="InterPro" id="IPR018171">
    <property type="entry name" value="Pept_tRNA_hydro_CS"/>
</dbReference>
<dbReference type="InterPro" id="IPR036416">
    <property type="entry name" value="Pept_tRNA_hydro_sf"/>
</dbReference>
<dbReference type="NCBIfam" id="TIGR00447">
    <property type="entry name" value="pth"/>
    <property type="match status" value="1"/>
</dbReference>
<dbReference type="PANTHER" id="PTHR17224">
    <property type="entry name" value="PEPTIDYL-TRNA HYDROLASE"/>
    <property type="match status" value="1"/>
</dbReference>
<dbReference type="PANTHER" id="PTHR17224:SF1">
    <property type="entry name" value="PEPTIDYL-TRNA HYDROLASE"/>
    <property type="match status" value="1"/>
</dbReference>
<dbReference type="Pfam" id="PF01195">
    <property type="entry name" value="Pept_tRNA_hydro"/>
    <property type="match status" value="1"/>
</dbReference>
<dbReference type="SUPFAM" id="SSF53178">
    <property type="entry name" value="Peptidyl-tRNA hydrolase-like"/>
    <property type="match status" value="1"/>
</dbReference>
<dbReference type="PROSITE" id="PS01195">
    <property type="entry name" value="PEPT_TRNA_HYDROL_1"/>
    <property type="match status" value="1"/>
</dbReference>
<dbReference type="PROSITE" id="PS01196">
    <property type="entry name" value="PEPT_TRNA_HYDROL_2"/>
    <property type="match status" value="1"/>
</dbReference>
<protein>
    <recommendedName>
        <fullName evidence="1">Peptidyl-tRNA hydrolase</fullName>
        <shortName evidence="1">Pth</shortName>
        <ecNumber evidence="1">3.1.1.29</ecNumber>
    </recommendedName>
</protein>
<keyword id="KW-0963">Cytoplasm</keyword>
<keyword id="KW-0378">Hydrolase</keyword>
<keyword id="KW-1185">Reference proteome</keyword>
<keyword id="KW-0694">RNA-binding</keyword>
<keyword id="KW-0820">tRNA-binding</keyword>
<accession>Q0KEQ0</accession>
<sequence>MIKLIVGLGNPGAEYEATRHNAGFWLVDQLARMGGATMRVEGRFHGLAARARLWDQDIWLLKPSTFMNRSGLAVVSLARFYKVLPDEIVVAHDEMDLPAGAAKLKRGGGAGGHNGLKDISAHLSTQDYWRLRLGVGHPRNAPGGAGAGREDVVNFVLKPPRREEQEAIDAAIDRCIEPLGLLARGDAERAMAQLHTTR</sequence>
<name>PTH_CUPNH</name>
<comment type="function">
    <text evidence="1">Hydrolyzes ribosome-free peptidyl-tRNAs (with 1 or more amino acids incorporated), which drop off the ribosome during protein synthesis, or as a result of ribosome stalling.</text>
</comment>
<comment type="function">
    <text evidence="1">Catalyzes the release of premature peptidyl moieties from peptidyl-tRNA molecules trapped in stalled 50S ribosomal subunits, and thus maintains levels of free tRNAs and 50S ribosomes.</text>
</comment>
<comment type="catalytic activity">
    <reaction evidence="1">
        <text>an N-acyl-L-alpha-aminoacyl-tRNA + H2O = an N-acyl-L-amino acid + a tRNA + H(+)</text>
        <dbReference type="Rhea" id="RHEA:54448"/>
        <dbReference type="Rhea" id="RHEA-COMP:10123"/>
        <dbReference type="Rhea" id="RHEA-COMP:13883"/>
        <dbReference type="ChEBI" id="CHEBI:15377"/>
        <dbReference type="ChEBI" id="CHEBI:15378"/>
        <dbReference type="ChEBI" id="CHEBI:59874"/>
        <dbReference type="ChEBI" id="CHEBI:78442"/>
        <dbReference type="ChEBI" id="CHEBI:138191"/>
        <dbReference type="EC" id="3.1.1.29"/>
    </reaction>
</comment>
<comment type="subunit">
    <text evidence="1">Monomer.</text>
</comment>
<comment type="subcellular location">
    <subcellularLocation>
        <location evidence="1">Cytoplasm</location>
    </subcellularLocation>
</comment>
<comment type="similarity">
    <text evidence="1">Belongs to the PTH family.</text>
</comment>
<proteinExistence type="inferred from homology"/>